<proteinExistence type="inferred from homology"/>
<protein>
    <recommendedName>
        <fullName>Restriction of telomere capping protein 5</fullName>
    </recommendedName>
</protein>
<accession>C5P441</accession>
<feature type="chain" id="PRO_0000408822" description="Restriction of telomere capping protein 5">
    <location>
        <begin position="1"/>
        <end position="666"/>
    </location>
</feature>
<feature type="domain" description="TLDc" evidence="2">
    <location>
        <begin position="364"/>
        <end position="592"/>
    </location>
</feature>
<feature type="region of interest" description="Disordered" evidence="3">
    <location>
        <begin position="329"/>
        <end position="354"/>
    </location>
</feature>
<feature type="compositionally biased region" description="Basic and acidic residues" evidence="3">
    <location>
        <begin position="329"/>
        <end position="341"/>
    </location>
</feature>
<sequence length="666" mass="72540">MGAGQSTRSSLNKSSPEELSHVLAHRFASKCFTPLELTHFKDNFNSRALDENGLRHWNEEILSQFLGIPDGAGEKAGPHTDATLDAGPVIFRMVSYLGAFPFQNTLAPSVLTYEAIIKVVVLLTERYGRVLRRGRKDRIKLLFGSLADVGRTQVEEKEMPVQESNDGKANGIAKGNPSHVTGFAIDAPANDDEEEEDDDDDLALAALESLDAIEVFKHDQRIDRSVYKARVSIDTFRRLIALILVIAPLHPIGTTSKLIADQDAESIDAIQAQVDSIIAAFGEEADNDGITYKSFSRVLRTSLPFLFDPLTPLFEHFLFSKNLDLSRRKESRSTEPEHEKSSSTPPPHSPHSESVFLPGPFESNILNTALLSHLSFFLSTSYPLPNLFRNGTRLHPVFSSVYHGESLTAFSHHVLTWHAPSILLLKGVTDSSSSRQDTVLVGAYLPEPWKQSSTTSSDHASDYLDSSKFPCLFQLLPTHTVLLASPFFKTLKFNMPVASFSTKSGIALGCMIPPSSRTSLHHDLRPRPAGGGSLIIDPALENATFVVSDGLNGDGVFLPPGLSPSSSSSFSASALSSTTSISVHAIEVWGVVPTQPELGPVLDPDSSRGDAVAAQKAAWDFEAREAERRRTIHLKVGGGDSEEQTGRALLEMAGIIGDSNYSPRKH</sequence>
<dbReference type="EMBL" id="ACFW01000015">
    <property type="protein sequence ID" value="EER28459.1"/>
    <property type="molecule type" value="Genomic_DNA"/>
</dbReference>
<dbReference type="RefSeq" id="XP_003070604.1">
    <property type="nucleotide sequence ID" value="XM_003070558.1"/>
</dbReference>
<dbReference type="SMR" id="C5P441"/>
<dbReference type="GeneID" id="9696099"/>
<dbReference type="KEGG" id="cpw:9696099"/>
<dbReference type="VEuPathDB" id="FungiDB:CPC735_063320"/>
<dbReference type="HOGENOM" id="CLU_011918_1_0_1"/>
<dbReference type="OrthoDB" id="289228at2759"/>
<dbReference type="Proteomes" id="UP000009084">
    <property type="component" value="Unassembled WGS sequence"/>
</dbReference>
<dbReference type="GO" id="GO:0005737">
    <property type="term" value="C:cytoplasm"/>
    <property type="evidence" value="ECO:0007669"/>
    <property type="project" value="UniProtKB-SubCell"/>
</dbReference>
<dbReference type="InterPro" id="IPR006571">
    <property type="entry name" value="TLDc_dom"/>
</dbReference>
<dbReference type="Pfam" id="PF07534">
    <property type="entry name" value="TLD"/>
    <property type="match status" value="1"/>
</dbReference>
<dbReference type="SMART" id="SM00584">
    <property type="entry name" value="TLDc"/>
    <property type="match status" value="1"/>
</dbReference>
<dbReference type="PROSITE" id="PS51886">
    <property type="entry name" value="TLDC"/>
    <property type="match status" value="1"/>
</dbReference>
<name>RTC5_COCP7</name>
<organism>
    <name type="scientific">Coccidioides posadasii (strain C735)</name>
    <name type="common">Valley fever fungus</name>
    <dbReference type="NCBI Taxonomy" id="222929"/>
    <lineage>
        <taxon>Eukaryota</taxon>
        <taxon>Fungi</taxon>
        <taxon>Dikarya</taxon>
        <taxon>Ascomycota</taxon>
        <taxon>Pezizomycotina</taxon>
        <taxon>Eurotiomycetes</taxon>
        <taxon>Eurotiomycetidae</taxon>
        <taxon>Onygenales</taxon>
        <taxon>Onygenaceae</taxon>
        <taxon>Coccidioides</taxon>
    </lineage>
</organism>
<comment type="function">
    <text evidence="1">May be involved in a process influencing telomere capping.</text>
</comment>
<comment type="subcellular location">
    <subcellularLocation>
        <location evidence="1">Cytoplasm</location>
    </subcellularLocation>
</comment>
<comment type="similarity">
    <text evidence="4">Belongs to the RTC5 family.</text>
</comment>
<gene>
    <name type="primary">RTC5</name>
    <name type="ORF">CPC735_063320</name>
</gene>
<evidence type="ECO:0000250" key="1"/>
<evidence type="ECO:0000255" key="2">
    <source>
        <dbReference type="PROSITE-ProRule" id="PRU01234"/>
    </source>
</evidence>
<evidence type="ECO:0000256" key="3">
    <source>
        <dbReference type="SAM" id="MobiDB-lite"/>
    </source>
</evidence>
<evidence type="ECO:0000305" key="4"/>
<keyword id="KW-0963">Cytoplasm</keyword>
<reference key="1">
    <citation type="journal article" date="2009" name="Genome Res.">
        <title>Comparative genomic analyses of the human fungal pathogens Coccidioides and their relatives.</title>
        <authorList>
            <person name="Sharpton T.J."/>
            <person name="Stajich J.E."/>
            <person name="Rounsley S.D."/>
            <person name="Gardner M.J."/>
            <person name="Wortman J.R."/>
            <person name="Jordar V.S."/>
            <person name="Maiti R."/>
            <person name="Kodira C.D."/>
            <person name="Neafsey D.E."/>
            <person name="Zeng Q."/>
            <person name="Hung C.-Y."/>
            <person name="McMahan C."/>
            <person name="Muszewska A."/>
            <person name="Grynberg M."/>
            <person name="Mandel M.A."/>
            <person name="Kellner E.M."/>
            <person name="Barker B.M."/>
            <person name="Galgiani J.N."/>
            <person name="Orbach M.J."/>
            <person name="Kirkland T.N."/>
            <person name="Cole G.T."/>
            <person name="Henn M.R."/>
            <person name="Birren B.W."/>
            <person name="Taylor J.W."/>
        </authorList>
    </citation>
    <scope>NUCLEOTIDE SEQUENCE [LARGE SCALE GENOMIC DNA]</scope>
    <source>
        <strain>C735</strain>
    </source>
</reference>